<accession>P50021</accession>
<accession>Q31KC1</accession>
<feature type="chain" id="PRO_0000078564" description="Chaperone protein dnaK2">
    <location>
        <begin position="1"/>
        <end position="634"/>
    </location>
</feature>
<feature type="region of interest" description="Disordered" evidence="2">
    <location>
        <begin position="601"/>
        <end position="634"/>
    </location>
</feature>
<feature type="compositionally biased region" description="Low complexity" evidence="2">
    <location>
        <begin position="601"/>
        <end position="620"/>
    </location>
</feature>
<feature type="compositionally biased region" description="Acidic residues" evidence="2">
    <location>
        <begin position="621"/>
        <end position="634"/>
    </location>
</feature>
<feature type="modified residue" description="Phosphothreonine; by autocatalysis" evidence="1">
    <location>
        <position position="197"/>
    </location>
</feature>
<feature type="sequence conflict" description="In Ref. 1; BAA05904." evidence="3" ref="1">
    <original>D</original>
    <variation>N</variation>
    <location>
        <position position="192"/>
    </location>
</feature>
<name>DNAK2_SYNE7</name>
<gene>
    <name type="primary">dnaK2</name>
    <name type="ordered locus">Synpcc7942_2468</name>
</gene>
<comment type="function">
    <text evidence="1">Acts as a chaperone.</text>
</comment>
<comment type="similarity">
    <text evidence="3">Belongs to the heat shock protein 70 family.</text>
</comment>
<proteinExistence type="inferred from homology"/>
<organism>
    <name type="scientific">Synechococcus elongatus (strain ATCC 33912 / PCC 7942 / FACHB-805)</name>
    <name type="common">Anacystis nidulans R2</name>
    <dbReference type="NCBI Taxonomy" id="1140"/>
    <lineage>
        <taxon>Bacteria</taxon>
        <taxon>Bacillati</taxon>
        <taxon>Cyanobacteriota</taxon>
        <taxon>Cyanophyceae</taxon>
        <taxon>Synechococcales</taxon>
        <taxon>Synechococcaceae</taxon>
        <taxon>Synechococcus</taxon>
    </lineage>
</organism>
<evidence type="ECO:0000250" key="1"/>
<evidence type="ECO:0000256" key="2">
    <source>
        <dbReference type="SAM" id="MobiDB-lite"/>
    </source>
</evidence>
<evidence type="ECO:0000305" key="3"/>
<dbReference type="EMBL" id="D28551">
    <property type="protein sequence ID" value="BAA05904.1"/>
    <property type="molecule type" value="Genomic_DNA"/>
</dbReference>
<dbReference type="EMBL" id="CP000100">
    <property type="protein sequence ID" value="ABB58498.1"/>
    <property type="molecule type" value="Genomic_DNA"/>
</dbReference>
<dbReference type="PIR" id="JC2376">
    <property type="entry name" value="JC2376"/>
</dbReference>
<dbReference type="SMR" id="P50021"/>
<dbReference type="STRING" id="1140.Synpcc7942_2468"/>
<dbReference type="PaxDb" id="1140-Synpcc7942_2468"/>
<dbReference type="KEGG" id="syf:Synpcc7942_2468"/>
<dbReference type="eggNOG" id="COG0443">
    <property type="taxonomic scope" value="Bacteria"/>
</dbReference>
<dbReference type="HOGENOM" id="CLU_005965_2_4_3"/>
<dbReference type="OrthoDB" id="9766019at2"/>
<dbReference type="BioCyc" id="SYNEL:SYNPCC7942_2468-MONOMER"/>
<dbReference type="Proteomes" id="UP000889800">
    <property type="component" value="Chromosome"/>
</dbReference>
<dbReference type="GO" id="GO:0005524">
    <property type="term" value="F:ATP binding"/>
    <property type="evidence" value="ECO:0007669"/>
    <property type="project" value="UniProtKB-UniRule"/>
</dbReference>
<dbReference type="GO" id="GO:0140662">
    <property type="term" value="F:ATP-dependent protein folding chaperone"/>
    <property type="evidence" value="ECO:0007669"/>
    <property type="project" value="InterPro"/>
</dbReference>
<dbReference type="GO" id="GO:0051082">
    <property type="term" value="F:unfolded protein binding"/>
    <property type="evidence" value="ECO:0007669"/>
    <property type="project" value="InterPro"/>
</dbReference>
<dbReference type="CDD" id="cd10234">
    <property type="entry name" value="ASKHA_NBD_HSP70_DnaK-like"/>
    <property type="match status" value="1"/>
</dbReference>
<dbReference type="FunFam" id="2.60.34.10:FF:000014">
    <property type="entry name" value="Chaperone protein DnaK HSP70"/>
    <property type="match status" value="1"/>
</dbReference>
<dbReference type="FunFam" id="1.20.1270.10:FF:000001">
    <property type="entry name" value="Molecular chaperone DnaK"/>
    <property type="match status" value="1"/>
</dbReference>
<dbReference type="FunFam" id="3.30.420.40:FF:000004">
    <property type="entry name" value="Molecular chaperone DnaK"/>
    <property type="match status" value="1"/>
</dbReference>
<dbReference type="FunFam" id="3.90.640.10:FF:000003">
    <property type="entry name" value="Molecular chaperone DnaK"/>
    <property type="match status" value="1"/>
</dbReference>
<dbReference type="Gene3D" id="1.20.1270.10">
    <property type="match status" value="1"/>
</dbReference>
<dbReference type="Gene3D" id="3.30.420.40">
    <property type="match status" value="2"/>
</dbReference>
<dbReference type="Gene3D" id="3.90.640.10">
    <property type="entry name" value="Actin, Chain A, domain 4"/>
    <property type="match status" value="1"/>
</dbReference>
<dbReference type="Gene3D" id="2.60.34.10">
    <property type="entry name" value="Substrate Binding Domain Of DNAk, Chain A, domain 1"/>
    <property type="match status" value="1"/>
</dbReference>
<dbReference type="HAMAP" id="MF_00332">
    <property type="entry name" value="DnaK"/>
    <property type="match status" value="1"/>
</dbReference>
<dbReference type="InterPro" id="IPR043129">
    <property type="entry name" value="ATPase_NBD"/>
</dbReference>
<dbReference type="InterPro" id="IPR012725">
    <property type="entry name" value="Chaperone_DnaK"/>
</dbReference>
<dbReference type="InterPro" id="IPR018181">
    <property type="entry name" value="Heat_shock_70_CS"/>
</dbReference>
<dbReference type="InterPro" id="IPR029048">
    <property type="entry name" value="HSP70_C_sf"/>
</dbReference>
<dbReference type="InterPro" id="IPR029047">
    <property type="entry name" value="HSP70_peptide-bd_sf"/>
</dbReference>
<dbReference type="InterPro" id="IPR013126">
    <property type="entry name" value="Hsp_70_fam"/>
</dbReference>
<dbReference type="NCBIfam" id="NF001413">
    <property type="entry name" value="PRK00290.1"/>
    <property type="match status" value="1"/>
</dbReference>
<dbReference type="NCBIfam" id="NF003520">
    <property type="entry name" value="PRK05183.1"/>
    <property type="match status" value="1"/>
</dbReference>
<dbReference type="NCBIfam" id="TIGR02350">
    <property type="entry name" value="prok_dnaK"/>
    <property type="match status" value="1"/>
</dbReference>
<dbReference type="PANTHER" id="PTHR19375">
    <property type="entry name" value="HEAT SHOCK PROTEIN 70KDA"/>
    <property type="match status" value="1"/>
</dbReference>
<dbReference type="Pfam" id="PF00012">
    <property type="entry name" value="HSP70"/>
    <property type="match status" value="1"/>
</dbReference>
<dbReference type="PRINTS" id="PR00301">
    <property type="entry name" value="HEATSHOCK70"/>
</dbReference>
<dbReference type="SUPFAM" id="SSF53067">
    <property type="entry name" value="Actin-like ATPase domain"/>
    <property type="match status" value="2"/>
</dbReference>
<dbReference type="SUPFAM" id="SSF100934">
    <property type="entry name" value="Heat shock protein 70kD (HSP70), C-terminal subdomain"/>
    <property type="match status" value="1"/>
</dbReference>
<dbReference type="SUPFAM" id="SSF100920">
    <property type="entry name" value="Heat shock protein 70kD (HSP70), peptide-binding domain"/>
    <property type="match status" value="1"/>
</dbReference>
<dbReference type="PROSITE" id="PS00297">
    <property type="entry name" value="HSP70_1"/>
    <property type="match status" value="1"/>
</dbReference>
<dbReference type="PROSITE" id="PS00329">
    <property type="entry name" value="HSP70_2"/>
    <property type="match status" value="1"/>
</dbReference>
<dbReference type="PROSITE" id="PS01036">
    <property type="entry name" value="HSP70_3"/>
    <property type="match status" value="1"/>
</dbReference>
<protein>
    <recommendedName>
        <fullName>Chaperone protein dnaK2</fullName>
    </recommendedName>
    <alternativeName>
        <fullName>HSP70-2</fullName>
    </alternativeName>
    <alternativeName>
        <fullName>Heat shock 70 kDa protein 2</fullName>
    </alternativeName>
    <alternativeName>
        <fullName>Heat shock protein 70-2</fullName>
    </alternativeName>
</protein>
<keyword id="KW-0067">ATP-binding</keyword>
<keyword id="KW-0143">Chaperone</keyword>
<keyword id="KW-0547">Nucleotide-binding</keyword>
<keyword id="KW-0597">Phosphoprotein</keyword>
<keyword id="KW-1185">Reference proteome</keyword>
<keyword id="KW-0346">Stress response</keyword>
<reference key="1">
    <citation type="journal article" date="1994" name="Biochem. Biophys. Res. Commun.">
        <title>Identification of dnaK multigene family in Synechococcus sp. PCC7942.</title>
        <authorList>
            <person name="Nimura K."/>
            <person name="Yoshikawa H."/>
            <person name="Takahashi H."/>
        </authorList>
    </citation>
    <scope>NUCLEOTIDE SEQUENCE [GENOMIC DNA]</scope>
</reference>
<reference key="2">
    <citation type="submission" date="2005-08" db="EMBL/GenBank/DDBJ databases">
        <title>Complete sequence of chromosome 1 of Synechococcus elongatus PCC 7942.</title>
        <authorList>
            <consortium name="US DOE Joint Genome Institute"/>
            <person name="Copeland A."/>
            <person name="Lucas S."/>
            <person name="Lapidus A."/>
            <person name="Barry K."/>
            <person name="Detter J.C."/>
            <person name="Glavina T."/>
            <person name="Hammon N."/>
            <person name="Israni S."/>
            <person name="Pitluck S."/>
            <person name="Schmutz J."/>
            <person name="Larimer F."/>
            <person name="Land M."/>
            <person name="Kyrpides N."/>
            <person name="Lykidis A."/>
            <person name="Golden S."/>
            <person name="Richardson P."/>
        </authorList>
    </citation>
    <scope>NUCLEOTIDE SEQUENCE [LARGE SCALE GENOMIC DNA]</scope>
    <source>
        <strain>ATCC 33912 / PCC 7942 / FACHB-805</strain>
    </source>
</reference>
<sequence length="634" mass="67768">MAKVVGIDLGTTNSCVAVMEGGKPTVIANAEGFRTTPSVVAFAKNQDRLVGQIAKRQAVMNPENTFYSVKRFIGRRPDEVTNELTEVAYKVDTSGNAVKLDSSNAGKQFAPEEISAQVLRKLAEDASKYLGETVTQAVITVPAYFNDSQRQATKDAGKIAGLEVLRIINEPTAAALAYGLDKKSNERILVFDLGGGTFDVSVLEVGDGVFEVLATSGDTHLGGDDFDKKIVDFLAGEFQKNEGIDLRKDKQALQRLTEAAEKAKIELSSATQTEINLPFITATQDGPKHLDLTLTRAKFEELASDLIDRCRIPVEQAIKDAKLALSEIDEIVLVGGSTRIPAVQAIVKQMTGKEPNQSVNPDEVVAIGAAIQGGVLAGEVKDILLLDVTPLSLGVETLGGVMTKLIPRNTTIPTKKSETFSTAADGQTNVEIHVLQGEREMASDNKSLGTFRLDGIPPAPRGVPQIEVIFDIDANGILNVTAKDKGSGKEQSISITGASTLSDNEVDRMVKDAEANAAADKERRERIDLKNQADTLVYQSEKQLSELGDKISADEKSKVEGFIQELKDALAAEDYDKIKSIIEQLQQALYAAGSSVYQQASAEASANAQAGPSSSSSSSSGDDDVIDAEFSESK</sequence>